<keyword id="KW-0687">Ribonucleoprotein</keyword>
<keyword id="KW-0689">Ribosomal protein</keyword>
<keyword id="KW-0694">RNA-binding</keyword>
<keyword id="KW-0699">rRNA-binding</keyword>
<organism>
    <name type="scientific">Staphylococcus aureus (strain Newman)</name>
    <dbReference type="NCBI Taxonomy" id="426430"/>
    <lineage>
        <taxon>Bacteria</taxon>
        <taxon>Bacillati</taxon>
        <taxon>Bacillota</taxon>
        <taxon>Bacilli</taxon>
        <taxon>Bacillales</taxon>
        <taxon>Staphylococcaceae</taxon>
        <taxon>Staphylococcus</taxon>
    </lineage>
</organism>
<evidence type="ECO:0000255" key="1">
    <source>
        <dbReference type="HAMAP-Rule" id="MF_00382"/>
    </source>
</evidence>
<evidence type="ECO:0000305" key="2"/>
<comment type="function">
    <text evidence="1">Binds directly to 23S ribosomal RNA and is necessary for the in vitro assembly process of the 50S ribosomal subunit. It is not involved in the protein synthesizing functions of that subunit.</text>
</comment>
<comment type="similarity">
    <text evidence="1">Belongs to the bacterial ribosomal protein bL20 family.</text>
</comment>
<proteinExistence type="inferred from homology"/>
<sequence>MPRVKGGTVTRARRKKTIKLAKGYFGSKHTLYKVAKQQVMKSGQYAFRDRRQRKRDFRKLWITRINAAARQHEMSYSRLMNGLKKAGIDINRKMLSEIAISDEKAFAQLVTKAKDALK</sequence>
<dbReference type="EMBL" id="AP009351">
    <property type="protein sequence ID" value="BAF67844.1"/>
    <property type="molecule type" value="Genomic_DNA"/>
</dbReference>
<dbReference type="RefSeq" id="WP_001138360.1">
    <property type="nucleotide sequence ID" value="NZ_JBBIAE010000001.1"/>
</dbReference>
<dbReference type="SMR" id="A6QHL2"/>
<dbReference type="GeneID" id="98346040"/>
<dbReference type="KEGG" id="sae:NWMN_1572"/>
<dbReference type="HOGENOM" id="CLU_123265_0_1_9"/>
<dbReference type="Proteomes" id="UP000006386">
    <property type="component" value="Chromosome"/>
</dbReference>
<dbReference type="GO" id="GO:1990904">
    <property type="term" value="C:ribonucleoprotein complex"/>
    <property type="evidence" value="ECO:0007669"/>
    <property type="project" value="UniProtKB-KW"/>
</dbReference>
<dbReference type="GO" id="GO:0005840">
    <property type="term" value="C:ribosome"/>
    <property type="evidence" value="ECO:0007669"/>
    <property type="project" value="UniProtKB-KW"/>
</dbReference>
<dbReference type="GO" id="GO:0019843">
    <property type="term" value="F:rRNA binding"/>
    <property type="evidence" value="ECO:0007669"/>
    <property type="project" value="UniProtKB-UniRule"/>
</dbReference>
<dbReference type="GO" id="GO:0003735">
    <property type="term" value="F:structural constituent of ribosome"/>
    <property type="evidence" value="ECO:0007669"/>
    <property type="project" value="InterPro"/>
</dbReference>
<dbReference type="GO" id="GO:0000027">
    <property type="term" value="P:ribosomal large subunit assembly"/>
    <property type="evidence" value="ECO:0007669"/>
    <property type="project" value="UniProtKB-UniRule"/>
</dbReference>
<dbReference type="GO" id="GO:0006412">
    <property type="term" value="P:translation"/>
    <property type="evidence" value="ECO:0007669"/>
    <property type="project" value="InterPro"/>
</dbReference>
<dbReference type="CDD" id="cd07026">
    <property type="entry name" value="Ribosomal_L20"/>
    <property type="match status" value="1"/>
</dbReference>
<dbReference type="FunFam" id="1.10.1900.20:FF:000001">
    <property type="entry name" value="50S ribosomal protein L20"/>
    <property type="match status" value="1"/>
</dbReference>
<dbReference type="Gene3D" id="6.10.160.10">
    <property type="match status" value="1"/>
</dbReference>
<dbReference type="Gene3D" id="1.10.1900.20">
    <property type="entry name" value="Ribosomal protein L20"/>
    <property type="match status" value="1"/>
</dbReference>
<dbReference type="HAMAP" id="MF_00382">
    <property type="entry name" value="Ribosomal_bL20"/>
    <property type="match status" value="1"/>
</dbReference>
<dbReference type="InterPro" id="IPR005813">
    <property type="entry name" value="Ribosomal_bL20"/>
</dbReference>
<dbReference type="InterPro" id="IPR049946">
    <property type="entry name" value="RIBOSOMAL_L20_CS"/>
</dbReference>
<dbReference type="InterPro" id="IPR035566">
    <property type="entry name" value="Ribosomal_protein_bL20_C"/>
</dbReference>
<dbReference type="NCBIfam" id="TIGR01032">
    <property type="entry name" value="rplT_bact"/>
    <property type="match status" value="1"/>
</dbReference>
<dbReference type="PANTHER" id="PTHR10986">
    <property type="entry name" value="39S RIBOSOMAL PROTEIN L20"/>
    <property type="match status" value="1"/>
</dbReference>
<dbReference type="Pfam" id="PF00453">
    <property type="entry name" value="Ribosomal_L20"/>
    <property type="match status" value="1"/>
</dbReference>
<dbReference type="PRINTS" id="PR00062">
    <property type="entry name" value="RIBOSOMALL20"/>
</dbReference>
<dbReference type="SUPFAM" id="SSF74731">
    <property type="entry name" value="Ribosomal protein L20"/>
    <property type="match status" value="1"/>
</dbReference>
<dbReference type="PROSITE" id="PS00937">
    <property type="entry name" value="RIBOSOMAL_L20"/>
    <property type="match status" value="1"/>
</dbReference>
<gene>
    <name evidence="1" type="primary">rplT</name>
    <name type="ordered locus">NWMN_1572</name>
</gene>
<name>RL20_STAAE</name>
<reference key="1">
    <citation type="journal article" date="2008" name="J. Bacteriol.">
        <title>Genome sequence of Staphylococcus aureus strain Newman and comparative analysis of staphylococcal genomes: polymorphism and evolution of two major pathogenicity islands.</title>
        <authorList>
            <person name="Baba T."/>
            <person name="Bae T."/>
            <person name="Schneewind O."/>
            <person name="Takeuchi F."/>
            <person name="Hiramatsu K."/>
        </authorList>
    </citation>
    <scope>NUCLEOTIDE SEQUENCE [LARGE SCALE GENOMIC DNA]</scope>
    <source>
        <strain>Newman</strain>
    </source>
</reference>
<accession>A6QHL2</accession>
<feature type="chain" id="PRO_1000072186" description="Large ribosomal subunit protein bL20">
    <location>
        <begin position="1"/>
        <end position="118"/>
    </location>
</feature>
<protein>
    <recommendedName>
        <fullName evidence="1">Large ribosomal subunit protein bL20</fullName>
    </recommendedName>
    <alternativeName>
        <fullName evidence="2">50S ribosomal protein L20</fullName>
    </alternativeName>
</protein>